<organism>
    <name type="scientific">Homo sapiens</name>
    <name type="common">Human</name>
    <dbReference type="NCBI Taxonomy" id="9606"/>
    <lineage>
        <taxon>Eukaryota</taxon>
        <taxon>Metazoa</taxon>
        <taxon>Chordata</taxon>
        <taxon>Craniata</taxon>
        <taxon>Vertebrata</taxon>
        <taxon>Euteleostomi</taxon>
        <taxon>Mammalia</taxon>
        <taxon>Eutheria</taxon>
        <taxon>Euarchontoglires</taxon>
        <taxon>Primates</taxon>
        <taxon>Haplorrhini</taxon>
        <taxon>Catarrhini</taxon>
        <taxon>Hominidae</taxon>
        <taxon>Homo</taxon>
    </lineage>
</organism>
<proteinExistence type="evidence at protein level"/>
<name>ST14_HUMAN</name>
<feature type="chain" id="PRO_0000088712" description="Suppressor of tumorigenicity 14 protein">
    <location>
        <begin position="1"/>
        <end position="855"/>
    </location>
</feature>
<feature type="topological domain" description="Cytoplasmic" evidence="2">
    <location>
        <begin position="1"/>
        <end position="55"/>
    </location>
</feature>
<feature type="transmembrane region" description="Helical; Signal-anchor for type II membrane protein" evidence="2">
    <location>
        <begin position="56"/>
        <end position="76"/>
    </location>
</feature>
<feature type="topological domain" description="Extracellular" evidence="2">
    <location>
        <begin position="77"/>
        <end position="855"/>
    </location>
</feature>
<feature type="domain" description="SEA" evidence="5">
    <location>
        <begin position="86"/>
        <end position="203"/>
    </location>
</feature>
<feature type="domain" description="CUB 1" evidence="3">
    <location>
        <begin position="214"/>
        <end position="334"/>
    </location>
</feature>
<feature type="domain" description="CUB 2" evidence="3">
    <location>
        <begin position="340"/>
        <end position="447"/>
    </location>
</feature>
<feature type="domain" description="LDL-receptor class A 1" evidence="4">
    <location>
        <begin position="452"/>
        <end position="487"/>
    </location>
</feature>
<feature type="domain" description="LDL-receptor class A 2" evidence="4">
    <location>
        <begin position="487"/>
        <end position="524"/>
    </location>
</feature>
<feature type="domain" description="LDL-receptor class A 3" evidence="4">
    <location>
        <begin position="524"/>
        <end position="560"/>
    </location>
</feature>
<feature type="domain" description="LDL-receptor class A 4" evidence="4">
    <location>
        <begin position="566"/>
        <end position="603"/>
    </location>
</feature>
<feature type="domain" description="Peptidase S1" evidence="6">
    <location>
        <begin position="615"/>
        <end position="854"/>
    </location>
</feature>
<feature type="region of interest" description="Disordered" evidence="7">
    <location>
        <begin position="1"/>
        <end position="20"/>
    </location>
</feature>
<feature type="active site" description="Charge relay system">
    <location>
        <position position="656"/>
    </location>
</feature>
<feature type="active site" description="Charge relay system">
    <location>
        <position position="711"/>
    </location>
</feature>
<feature type="active site" description="Charge relay system">
    <location>
        <position position="805"/>
    </location>
</feature>
<feature type="glycosylation site" description="N-linked (GlcNAc...) asparagine" evidence="2">
    <location>
        <position position="109"/>
    </location>
</feature>
<feature type="glycosylation site" description="N-linked (GlcNAc...) asparagine" evidence="2">
    <location>
        <position position="302"/>
    </location>
</feature>
<feature type="glycosylation site" description="N-linked (GlcNAc...) asparagine" evidence="2">
    <location>
        <position position="485"/>
    </location>
</feature>
<feature type="glycosylation site" description="N-linked (GlcNAc...) asparagine" evidence="2">
    <location>
        <position position="772"/>
    </location>
</feature>
<feature type="disulfide bond" evidence="1">
    <location>
        <begin position="214"/>
        <end position="244"/>
    </location>
</feature>
<feature type="disulfide bond" evidence="1">
    <location>
        <begin position="340"/>
        <end position="366"/>
    </location>
</feature>
<feature type="disulfide bond" evidence="1">
    <location>
        <begin position="397"/>
        <end position="410"/>
    </location>
</feature>
<feature type="disulfide bond" evidence="1">
    <location>
        <begin position="453"/>
        <end position="464"/>
    </location>
</feature>
<feature type="disulfide bond" evidence="1">
    <location>
        <begin position="459"/>
        <end position="477"/>
    </location>
</feature>
<feature type="disulfide bond" evidence="1">
    <location>
        <begin position="471"/>
        <end position="486"/>
    </location>
</feature>
<feature type="disulfide bond" evidence="1">
    <location>
        <begin position="488"/>
        <end position="501"/>
    </location>
</feature>
<feature type="disulfide bond" evidence="1">
    <location>
        <begin position="496"/>
        <end position="514"/>
    </location>
</feature>
<feature type="disulfide bond" evidence="1">
    <location>
        <begin position="508"/>
        <end position="523"/>
    </location>
</feature>
<feature type="disulfide bond" evidence="1">
    <location>
        <begin position="525"/>
        <end position="537"/>
    </location>
</feature>
<feature type="disulfide bond" evidence="1">
    <location>
        <begin position="532"/>
        <end position="550"/>
    </location>
</feature>
<feature type="disulfide bond" evidence="1">
    <location>
        <begin position="544"/>
        <end position="559"/>
    </location>
</feature>
<feature type="disulfide bond" evidence="1">
    <location>
        <begin position="567"/>
        <end position="579"/>
    </location>
</feature>
<feature type="disulfide bond" evidence="1">
    <location>
        <begin position="574"/>
        <end position="593"/>
    </location>
</feature>
<feature type="disulfide bond" evidence="1">
    <location>
        <begin position="587"/>
        <end position="602"/>
    </location>
</feature>
<feature type="disulfide bond" evidence="9">
    <location>
        <begin position="641"/>
        <end position="657"/>
    </location>
</feature>
<feature type="disulfide bond" evidence="9">
    <location>
        <begin position="776"/>
        <end position="790"/>
    </location>
</feature>
<feature type="disulfide bond" evidence="9">
    <location>
        <begin position="801"/>
        <end position="830"/>
    </location>
</feature>
<feature type="sequence variant" id="VAR_032847" description="In dbSNP:rs7126904.">
    <original>M</original>
    <variation>I</variation>
    <location>
        <position position="285"/>
    </location>
</feature>
<feature type="sequence variant" id="VAR_032848" description="In dbSNP:rs17667603." evidence="17">
    <original>R</original>
    <variation>S</variation>
    <location>
        <position position="381"/>
    </location>
</feature>
<feature type="sequence variant" id="VAR_032849" description="In ARCI11; dbSNP:rs137852931." evidence="12">
    <original>G</original>
    <variation>R</variation>
    <location>
        <position position="827"/>
    </location>
</feature>
<feature type="mutagenesis site" description="Abolishes catalytic activity." evidence="11">
    <original>H</original>
    <variation>A</variation>
    <location>
        <position position="656"/>
    </location>
</feature>
<feature type="mutagenesis site" description="Abolishes catalytic activity." evidence="11">
    <original>D</original>
    <variation>A</variation>
    <location>
        <position position="711"/>
    </location>
</feature>
<feature type="mutagenesis site" description="Abolishes catalytic activity." evidence="11">
    <original>S</original>
    <variation>A</variation>
    <location>
        <position position="805"/>
    </location>
</feature>
<feature type="sequence conflict" description="In Ref. 3; BAB20376." evidence="18" ref="3">
    <original>A</original>
    <variation>V</variation>
    <location>
        <position position="674"/>
    </location>
</feature>
<feature type="strand" evidence="19">
    <location>
        <begin position="629"/>
        <end position="634"/>
    </location>
</feature>
<feature type="turn" evidence="19">
    <location>
        <begin position="635"/>
        <end position="637"/>
    </location>
</feature>
<feature type="strand" evidence="19">
    <location>
        <begin position="638"/>
        <end position="645"/>
    </location>
</feature>
<feature type="strand" evidence="19">
    <location>
        <begin position="647"/>
        <end position="653"/>
    </location>
</feature>
<feature type="helix" evidence="19">
    <location>
        <begin position="655"/>
        <end position="658"/>
    </location>
</feature>
<feature type="helix" evidence="19">
    <location>
        <begin position="669"/>
        <end position="671"/>
    </location>
</feature>
<feature type="strand" evidence="19">
    <location>
        <begin position="672"/>
        <end position="677"/>
    </location>
</feature>
<feature type="strand" evidence="21">
    <location>
        <begin position="683"/>
        <end position="688"/>
    </location>
</feature>
<feature type="strand" evidence="19">
    <location>
        <begin position="690"/>
        <end position="699"/>
    </location>
</feature>
<feature type="turn" evidence="19">
    <location>
        <begin position="705"/>
        <end position="707"/>
    </location>
</feature>
<feature type="strand" evidence="19">
    <location>
        <begin position="713"/>
        <end position="719"/>
    </location>
</feature>
<feature type="strand" evidence="22">
    <location>
        <begin position="725"/>
        <end position="727"/>
    </location>
</feature>
<feature type="strand" evidence="19">
    <location>
        <begin position="744"/>
        <end position="754"/>
    </location>
</feature>
<feature type="strand" evidence="19">
    <location>
        <begin position="764"/>
        <end position="770"/>
    </location>
</feature>
<feature type="helix" evidence="19">
    <location>
        <begin position="773"/>
        <end position="779"/>
    </location>
</feature>
<feature type="turn" evidence="19">
    <location>
        <begin position="781"/>
        <end position="783"/>
    </location>
</feature>
<feature type="strand" evidence="19">
    <location>
        <begin position="788"/>
        <end position="792"/>
    </location>
</feature>
<feature type="strand" evidence="19">
    <location>
        <begin position="797"/>
        <end position="799"/>
    </location>
</feature>
<feature type="turn" evidence="20">
    <location>
        <begin position="802"/>
        <end position="806"/>
    </location>
</feature>
<feature type="strand" evidence="19">
    <location>
        <begin position="808"/>
        <end position="812"/>
    </location>
</feature>
<feature type="strand" evidence="21">
    <location>
        <begin position="814"/>
        <end position="816"/>
    </location>
</feature>
<feature type="strand" evidence="19">
    <location>
        <begin position="818"/>
        <end position="826"/>
    </location>
</feature>
<feature type="strand" evidence="19">
    <location>
        <begin position="828"/>
        <end position="831"/>
    </location>
</feature>
<feature type="strand" evidence="21">
    <location>
        <begin position="833"/>
        <end position="835"/>
    </location>
</feature>
<feature type="strand" evidence="19">
    <location>
        <begin position="837"/>
        <end position="842"/>
    </location>
</feature>
<feature type="helix" evidence="19">
    <location>
        <begin position="843"/>
        <end position="845"/>
    </location>
</feature>
<feature type="helix" evidence="19">
    <location>
        <begin position="846"/>
        <end position="853"/>
    </location>
</feature>
<accession>Q9Y5Y6</accession>
<accession>Q9BS01</accession>
<accession>Q9H3S0</accession>
<accession>Q9HB36</accession>
<accession>Q9HCA3</accession>
<comment type="function">
    <text evidence="8 13 14">Exhibits trypsin-like activity as defined by cleavage of synthetic substrates with Arg or Lys as the P1 site (PubMed:10373424). Involved in the terminal differentiation of keratinocytes through prostasin (PRSS8) activation and filaggrin (FLG) processing (PubMed:18843291). Proteolytically cleaves and therefore activates TMPRSS13 (PubMed:28710277).</text>
</comment>
<comment type="catalytic activity">
    <reaction evidence="11">
        <text>Cleaves various synthetic substrates with Arg or Lys at the P1 position and prefers small side-chain amino acids, such as Ala and Gly, at the P2 position.</text>
        <dbReference type="EC" id="3.4.21.109"/>
    </reaction>
</comment>
<comment type="subunit">
    <text evidence="9 10 15 16">Interacts with CDCP1. May interact with TMEFF1. Interacts with iripin-3, a serine protease inhibitor from Ixodes ricinus saliva (PubMed:33732248). Interacts with iripin-1, a serine protease inhibitor from Ixodes ricinus saliva (PubMed:36756125).</text>
</comment>
<comment type="subcellular location">
    <subcellularLocation>
        <location evidence="18">Membrane</location>
        <topology evidence="2">Single-pass type II membrane protein</topology>
    </subcellularLocation>
</comment>
<comment type="disease" evidence="12 13">
    <disease id="DI-04098">
        <name>Ichthyosis, congenital, autosomal recessive 11</name>
        <acronym>ARCI11</acronym>
        <description>A form of autosomal recessive congenital ichthyosis, a disorder of keratinization with abnormal differentiation and desquamation of the epidermis, resulting in abnormal skin scaling over the whole body. The main skin phenotypes are lamellar ichthyosis (LI) and non-bullous congenital ichthyosiform erythroderma (NCIE), although phenotypic overlap within the same patient or among patients from the same family can occur. Lamellar ichthyosis is a condition often associated with an embedment in a collodion-like membrane at birth; skin scales later develop, covering the entire body surface. Non-bullous congenital ichthyosiform erythroderma characterized by fine whitish scaling on an erythrodermal background; larger brownish scales are present on the buttocks, neck and legs.</description>
        <dbReference type="MIM" id="602400"/>
    </disease>
    <text>The disease is caused by variants affecting the gene represented in this entry.</text>
</comment>
<comment type="similarity">
    <text evidence="6">Belongs to the peptidase S1 family.</text>
</comment>
<sequence>MGSDRARKGGGGPKDFGAGLKYNSRHEKVNGLEEGVEFLPVNNVKKVEKHGPGRWVVLAAVLIGLLLVLLGIGFLVWHLQYRDVRVQKVFNGYMRITNENFVDAYENSNSTEFVSLASKVKDALKLLYSGVPFLGPYHKESAVTAFSEGSVIAYYWSEFSIPQHLVEEAERVMAEERVVMLPPRARSLKSFVVTSVVAFPTDSKTVQRTQDNSCSFGLHARGVELMRFTTPGFPDSPYPAHARCQWALRGDADSVLSLTFRSFDLASCDERGSDLVTVYNTLSPMEPHALVQLCGTYPPSYNLTFHSSQNVLLITLITNTERRHPGFEATFFQLPRMSSCGGRLRKAQGTFNSPYYPGHYPPNIDCTWNIEVPNNQHVKVRFKFFYLLEPGVPAGTCPKDYVEINGEKYCGERSQFVVTSNSNKITVRFHSDQSYTDTGFLAEYLSYDSSDPCPGQFTCRTGRCIRKELRCDGWADCTDHSDELNCSCDAGHQFTCKNKFCKPLFWVCDSVNDCGDNSDEQGCSCPAQTFRCSNGKCLSKSQQCNGKDDCGDGSDEASCPKVNVVTCTKHTYRCLNGLCLSKGNPECDGKEDCSDGSDEKDCDCGLRSFTRQARVVGGTDADEGEWPWQVSLHALGQGHICGASLISPNWLVSAAHCYIDDRGFRYSDPTQWTAFLGLHDQSQRSAPGVQERRLKRIISHPFFNDFTFDYDIALLELEKPAEYSSMVRPICLPDASHVFPAGKAIWVTGWGHTQYGGTGALILQKGEIRVINQTTCENLLPQQITPRMMCVGFLSGGVDSCQGDSGGPLSSVEADGRIFQAGVVSWGDGCAQRNKPGVYTRLPLFRDWIKENTGV</sequence>
<protein>
    <recommendedName>
        <fullName>Suppressor of tumorigenicity 14 protein</fullName>
        <ecNumber>3.4.21.109</ecNumber>
    </recommendedName>
    <alternativeName>
        <fullName>Matriptase</fullName>
    </alternativeName>
    <alternativeName>
        <fullName>Membrane-type serine protease 1</fullName>
        <shortName>MT-SP1</shortName>
    </alternativeName>
    <alternativeName>
        <fullName>Prostamin</fullName>
    </alternativeName>
    <alternativeName>
        <fullName>Serine protease 14</fullName>
    </alternativeName>
    <alternativeName>
        <fullName>Serine protease TADG-15</fullName>
    </alternativeName>
    <alternativeName>
        <fullName>Tumor-associated differentially-expressed gene 15 protein</fullName>
    </alternativeName>
</protein>
<gene>
    <name type="primary">ST14</name>
    <name type="synonym">PRSS14</name>
    <name type="synonym">SNC19</name>
    <name type="synonym">TADG15</name>
</gene>
<keyword id="KW-0002">3D-structure</keyword>
<keyword id="KW-0225">Disease variant</keyword>
<keyword id="KW-1015">Disulfide bond</keyword>
<keyword id="KW-0325">Glycoprotein</keyword>
<keyword id="KW-0378">Hydrolase</keyword>
<keyword id="KW-1063">Hypotrichosis</keyword>
<keyword id="KW-0977">Ichthyosis</keyword>
<keyword id="KW-0472">Membrane</keyword>
<keyword id="KW-0645">Protease</keyword>
<keyword id="KW-1267">Proteomics identification</keyword>
<keyword id="KW-1185">Reference proteome</keyword>
<keyword id="KW-0677">Repeat</keyword>
<keyword id="KW-0720">Serine protease</keyword>
<keyword id="KW-0735">Signal-anchor</keyword>
<keyword id="KW-0812">Transmembrane</keyword>
<keyword id="KW-1133">Transmembrane helix</keyword>
<dbReference type="EC" id="3.4.21.109"/>
<dbReference type="EMBL" id="AF118224">
    <property type="protein sequence ID" value="AAD42765.2"/>
    <property type="molecule type" value="mRNA"/>
</dbReference>
<dbReference type="EMBL" id="AF133086">
    <property type="protein sequence ID" value="AAF00109.1"/>
    <property type="molecule type" value="mRNA"/>
</dbReference>
<dbReference type="EMBL" id="AB030036">
    <property type="protein sequence ID" value="BAB20376.1"/>
    <property type="molecule type" value="mRNA"/>
</dbReference>
<dbReference type="EMBL" id="AF057145">
    <property type="protein sequence ID" value="AAG15395.1"/>
    <property type="molecule type" value="mRNA"/>
</dbReference>
<dbReference type="EMBL" id="BC005826">
    <property type="protein sequence ID" value="AAH05826.2"/>
    <property type="molecule type" value="mRNA"/>
</dbReference>
<dbReference type="EMBL" id="BC030532">
    <property type="protein sequence ID" value="AAH30532.1"/>
    <property type="molecule type" value="mRNA"/>
</dbReference>
<dbReference type="EMBL" id="AF283256">
    <property type="protein sequence ID" value="AAG13949.1"/>
    <property type="molecule type" value="Genomic_DNA"/>
</dbReference>
<dbReference type="CCDS" id="CCDS8487.1"/>
<dbReference type="RefSeq" id="NP_068813.1">
    <property type="nucleotide sequence ID" value="NM_021978.4"/>
</dbReference>
<dbReference type="PDB" id="1EAW">
    <property type="method" value="X-ray"/>
    <property type="resolution" value="2.93 A"/>
    <property type="chains" value="A/C=615-855"/>
</dbReference>
<dbReference type="PDB" id="1EAX">
    <property type="method" value="X-ray"/>
    <property type="resolution" value="1.30 A"/>
    <property type="chains" value="A=615-855"/>
</dbReference>
<dbReference type="PDB" id="2GV6">
    <property type="method" value="X-ray"/>
    <property type="resolution" value="2.10 A"/>
    <property type="chains" value="A=615-855"/>
</dbReference>
<dbReference type="PDB" id="2GV7">
    <property type="method" value="X-ray"/>
    <property type="resolution" value="2.20 A"/>
    <property type="chains" value="A=615-855"/>
</dbReference>
<dbReference type="PDB" id="3BN9">
    <property type="method" value="X-ray"/>
    <property type="resolution" value="2.17 A"/>
    <property type="chains" value="A/B=615-855"/>
</dbReference>
<dbReference type="PDB" id="3NCL">
    <property type="method" value="X-ray"/>
    <property type="resolution" value="1.19 A"/>
    <property type="chains" value="A=615-855"/>
</dbReference>
<dbReference type="PDB" id="3NPS">
    <property type="method" value="X-ray"/>
    <property type="resolution" value="1.50 A"/>
    <property type="chains" value="A=615-855"/>
</dbReference>
<dbReference type="PDB" id="3P8F">
    <property type="method" value="X-ray"/>
    <property type="resolution" value="2.00 A"/>
    <property type="chains" value="A=615-855"/>
</dbReference>
<dbReference type="PDB" id="3P8G">
    <property type="method" value="X-ray"/>
    <property type="resolution" value="1.20 A"/>
    <property type="chains" value="A=615-855"/>
</dbReference>
<dbReference type="PDB" id="3SO3">
    <property type="method" value="X-ray"/>
    <property type="resolution" value="2.10 A"/>
    <property type="chains" value="A=615-855"/>
</dbReference>
<dbReference type="PDB" id="4IS5">
    <property type="method" value="X-ray"/>
    <property type="resolution" value="1.48 A"/>
    <property type="chains" value="A=615-855"/>
</dbReference>
<dbReference type="PDB" id="4ISL">
    <property type="method" value="X-ray"/>
    <property type="resolution" value="2.29 A"/>
    <property type="chains" value="A=615-855"/>
</dbReference>
<dbReference type="PDB" id="4ISN">
    <property type="method" value="X-ray"/>
    <property type="resolution" value="2.45 A"/>
    <property type="chains" value="A=615-855"/>
</dbReference>
<dbReference type="PDB" id="4ISO">
    <property type="method" value="X-ray"/>
    <property type="resolution" value="2.01 A"/>
    <property type="chains" value="A=615-855"/>
</dbReference>
<dbReference type="PDB" id="4JYT">
    <property type="method" value="X-ray"/>
    <property type="resolution" value="2.00 A"/>
    <property type="chains" value="A=615-855"/>
</dbReference>
<dbReference type="PDB" id="4JZ1">
    <property type="method" value="X-ray"/>
    <property type="resolution" value="1.90 A"/>
    <property type="chains" value="A=615-855"/>
</dbReference>
<dbReference type="PDB" id="4JZI">
    <property type="method" value="X-ray"/>
    <property type="resolution" value="2.00 A"/>
    <property type="chains" value="A=615-855"/>
</dbReference>
<dbReference type="PDB" id="4O97">
    <property type="method" value="X-ray"/>
    <property type="resolution" value="2.20 A"/>
    <property type="chains" value="A=615-855, B=604-607"/>
</dbReference>
<dbReference type="PDB" id="4O9V">
    <property type="method" value="X-ray"/>
    <property type="resolution" value="1.90 A"/>
    <property type="chains" value="A=615-855, B=604-607"/>
</dbReference>
<dbReference type="PDB" id="4R0I">
    <property type="method" value="X-ray"/>
    <property type="resolution" value="1.90 A"/>
    <property type="chains" value="A=615-855"/>
</dbReference>
<dbReference type="PDB" id="5LYO">
    <property type="method" value="X-ray"/>
    <property type="resolution" value="2.50 A"/>
    <property type="chains" value="A/B/C=604-855"/>
</dbReference>
<dbReference type="PDB" id="6N4T">
    <property type="method" value="X-ray"/>
    <property type="resolution" value="1.95 A"/>
    <property type="chains" value="A=615-855"/>
</dbReference>
<dbReference type="PDB" id="6T9T">
    <property type="method" value="X-ray"/>
    <property type="resolution" value="1.69 A"/>
    <property type="chains" value="A=615-855"/>
</dbReference>
<dbReference type="PDB" id="8G1V">
    <property type="method" value="X-ray"/>
    <property type="resolution" value="1.35 A"/>
    <property type="chains" value="A=615-855"/>
</dbReference>
<dbReference type="PDB" id="8G1W">
    <property type="method" value="X-ray"/>
    <property type="resolution" value="1.20 A"/>
    <property type="chains" value="A=615-855"/>
</dbReference>
<dbReference type="PDBsum" id="1EAW"/>
<dbReference type="PDBsum" id="1EAX"/>
<dbReference type="PDBsum" id="2GV6"/>
<dbReference type="PDBsum" id="2GV7"/>
<dbReference type="PDBsum" id="3BN9"/>
<dbReference type="PDBsum" id="3NCL"/>
<dbReference type="PDBsum" id="3NPS"/>
<dbReference type="PDBsum" id="3P8F"/>
<dbReference type="PDBsum" id="3P8G"/>
<dbReference type="PDBsum" id="3SO3"/>
<dbReference type="PDBsum" id="4IS5"/>
<dbReference type="PDBsum" id="4ISL"/>
<dbReference type="PDBsum" id="4ISN"/>
<dbReference type="PDBsum" id="4ISO"/>
<dbReference type="PDBsum" id="4JYT"/>
<dbReference type="PDBsum" id="4JZ1"/>
<dbReference type="PDBsum" id="4JZI"/>
<dbReference type="PDBsum" id="4O97"/>
<dbReference type="PDBsum" id="4O9V"/>
<dbReference type="PDBsum" id="4R0I"/>
<dbReference type="PDBsum" id="5LYO"/>
<dbReference type="PDBsum" id="6N4T"/>
<dbReference type="PDBsum" id="6T9T"/>
<dbReference type="PDBsum" id="8G1V"/>
<dbReference type="PDBsum" id="8G1W"/>
<dbReference type="SMR" id="Q9Y5Y6"/>
<dbReference type="BioGRID" id="112645">
    <property type="interactions" value="288"/>
</dbReference>
<dbReference type="FunCoup" id="Q9Y5Y6">
    <property type="interactions" value="663"/>
</dbReference>
<dbReference type="IntAct" id="Q9Y5Y6">
    <property type="interactions" value="199"/>
</dbReference>
<dbReference type="MINT" id="Q9Y5Y6"/>
<dbReference type="STRING" id="9606.ENSP00000278742"/>
<dbReference type="BindingDB" id="Q9Y5Y6"/>
<dbReference type="ChEMBL" id="CHEMBL3018"/>
<dbReference type="DrugBank" id="DB03127">
    <property type="generic name" value="Benzamidine"/>
</dbReference>
<dbReference type="DrugBank" id="DB13729">
    <property type="generic name" value="Camostat"/>
</dbReference>
<dbReference type="DrugBank" id="DB00013">
    <property type="generic name" value="Urokinase"/>
</dbReference>
<dbReference type="DrugCentral" id="Q9Y5Y6"/>
<dbReference type="GuidetoPHARMACOLOGY" id="2418"/>
<dbReference type="MEROPS" id="S01.302"/>
<dbReference type="TCDB" id="8.A.131.1.4">
    <property type="family name" value="the transmembrane protease serine 3 (tmprss3) family"/>
</dbReference>
<dbReference type="GlyConnect" id="1779">
    <property type="glycosylation" value="8 N-Linked glycans (3 sites)"/>
</dbReference>
<dbReference type="GlyCosmos" id="Q9Y5Y6">
    <property type="glycosylation" value="4 sites, 8 glycans"/>
</dbReference>
<dbReference type="GlyGen" id="Q9Y5Y6">
    <property type="glycosylation" value="13 sites, 22 N-linked glycans (3 sites), 1 O-linked glycan (2 sites)"/>
</dbReference>
<dbReference type="iPTMnet" id="Q9Y5Y6"/>
<dbReference type="PhosphoSitePlus" id="Q9Y5Y6"/>
<dbReference type="SwissPalm" id="Q9Y5Y6"/>
<dbReference type="BioMuta" id="ST14"/>
<dbReference type="DMDM" id="13124575"/>
<dbReference type="jPOST" id="Q9Y5Y6"/>
<dbReference type="MassIVE" id="Q9Y5Y6"/>
<dbReference type="PaxDb" id="9606-ENSP00000278742"/>
<dbReference type="PeptideAtlas" id="Q9Y5Y6"/>
<dbReference type="ProteomicsDB" id="86543"/>
<dbReference type="Pumba" id="Q9Y5Y6"/>
<dbReference type="ABCD" id="Q9Y5Y6">
    <property type="antibodies" value="3 sequenced antibodies"/>
</dbReference>
<dbReference type="Antibodypedia" id="33087">
    <property type="antibodies" value="429 antibodies from 36 providers"/>
</dbReference>
<dbReference type="DNASU" id="6768"/>
<dbReference type="Ensembl" id="ENST00000278742.6">
    <property type="protein sequence ID" value="ENSP00000278742.5"/>
    <property type="gene ID" value="ENSG00000149418.11"/>
</dbReference>
<dbReference type="GeneID" id="6768"/>
<dbReference type="KEGG" id="hsa:6768"/>
<dbReference type="MANE-Select" id="ENST00000278742.6">
    <property type="protein sequence ID" value="ENSP00000278742.5"/>
    <property type="RefSeq nucleotide sequence ID" value="NM_021978.4"/>
    <property type="RefSeq protein sequence ID" value="NP_068813.1"/>
</dbReference>
<dbReference type="UCSC" id="uc001qfw.4">
    <property type="organism name" value="human"/>
</dbReference>
<dbReference type="AGR" id="HGNC:11344"/>
<dbReference type="CTD" id="6768"/>
<dbReference type="DisGeNET" id="6768"/>
<dbReference type="GeneCards" id="ST14"/>
<dbReference type="HGNC" id="HGNC:11344">
    <property type="gene designation" value="ST14"/>
</dbReference>
<dbReference type="HPA" id="ENSG00000149418">
    <property type="expression patterns" value="Tissue enhanced (intestine)"/>
</dbReference>
<dbReference type="MalaCards" id="ST14"/>
<dbReference type="MIM" id="602400">
    <property type="type" value="phenotype"/>
</dbReference>
<dbReference type="MIM" id="606797">
    <property type="type" value="gene"/>
</dbReference>
<dbReference type="neXtProt" id="NX_Q9Y5Y6"/>
<dbReference type="OpenTargets" id="ENSG00000149418"/>
<dbReference type="Orphanet" id="91132">
    <property type="disease" value="Ichthyosis-hypotrichosis syndrome"/>
</dbReference>
<dbReference type="PharmGKB" id="PA36168"/>
<dbReference type="VEuPathDB" id="HostDB:ENSG00000149418"/>
<dbReference type="eggNOG" id="KOG3627">
    <property type="taxonomic scope" value="Eukaryota"/>
</dbReference>
<dbReference type="GeneTree" id="ENSGT00940000155418"/>
<dbReference type="HOGENOM" id="CLU_006842_19_3_1"/>
<dbReference type="InParanoid" id="Q9Y5Y6"/>
<dbReference type="OMA" id="LWTAYMG"/>
<dbReference type="OrthoDB" id="6380398at2759"/>
<dbReference type="PAN-GO" id="Q9Y5Y6">
    <property type="GO annotations" value="1 GO annotation based on evolutionary models"/>
</dbReference>
<dbReference type="PhylomeDB" id="Q9Y5Y6"/>
<dbReference type="TreeFam" id="TF330647"/>
<dbReference type="BRENDA" id="3.4.21.109">
    <property type="organism ID" value="2681"/>
</dbReference>
<dbReference type="PathwayCommons" id="Q9Y5Y6"/>
<dbReference type="Reactome" id="R-HSA-6809371">
    <property type="pathway name" value="Formation of the cornified envelope"/>
</dbReference>
<dbReference type="SignaLink" id="Q9Y5Y6"/>
<dbReference type="BioGRID-ORCS" id="6768">
    <property type="hits" value="18 hits in 1153 CRISPR screens"/>
</dbReference>
<dbReference type="ChiTaRS" id="ST14">
    <property type="organism name" value="human"/>
</dbReference>
<dbReference type="EvolutionaryTrace" id="Q9Y5Y6"/>
<dbReference type="GenomeRNAi" id="6768"/>
<dbReference type="Pharos" id="Q9Y5Y6">
    <property type="development level" value="Tchem"/>
</dbReference>
<dbReference type="PRO" id="PR:Q9Y5Y6"/>
<dbReference type="Proteomes" id="UP000005640">
    <property type="component" value="Chromosome 11"/>
</dbReference>
<dbReference type="RNAct" id="Q9Y5Y6">
    <property type="molecule type" value="protein"/>
</dbReference>
<dbReference type="Bgee" id="ENSG00000149418">
    <property type="expression patterns" value="Expressed in mucosa of transverse colon and 174 other cell types or tissues"/>
</dbReference>
<dbReference type="GO" id="GO:0016323">
    <property type="term" value="C:basolateral plasma membrane"/>
    <property type="evidence" value="ECO:0007669"/>
    <property type="project" value="Ensembl"/>
</dbReference>
<dbReference type="GO" id="GO:0009897">
    <property type="term" value="C:external side of plasma membrane"/>
    <property type="evidence" value="ECO:0007669"/>
    <property type="project" value="Ensembl"/>
</dbReference>
<dbReference type="GO" id="GO:0005615">
    <property type="term" value="C:extracellular space"/>
    <property type="evidence" value="ECO:0007669"/>
    <property type="project" value="Ensembl"/>
</dbReference>
<dbReference type="GO" id="GO:0005886">
    <property type="term" value="C:plasma membrane"/>
    <property type="evidence" value="ECO:0000304"/>
    <property type="project" value="Reactome"/>
</dbReference>
<dbReference type="GO" id="GO:0004252">
    <property type="term" value="F:serine-type endopeptidase activity"/>
    <property type="evidence" value="ECO:0007669"/>
    <property type="project" value="InterPro"/>
</dbReference>
<dbReference type="GO" id="GO:0008236">
    <property type="term" value="F:serine-type peptidase activity"/>
    <property type="evidence" value="ECO:0000314"/>
    <property type="project" value="UniProtKB"/>
</dbReference>
<dbReference type="GO" id="GO:0060672">
    <property type="term" value="P:epithelial cell morphogenesis involved in placental branching"/>
    <property type="evidence" value="ECO:0007669"/>
    <property type="project" value="Ensembl"/>
</dbReference>
<dbReference type="GO" id="GO:0030216">
    <property type="term" value="P:keratinocyte differentiation"/>
    <property type="evidence" value="ECO:0000315"/>
    <property type="project" value="UniProtKB"/>
</dbReference>
<dbReference type="GO" id="GO:0001843">
    <property type="term" value="P:neural tube closure"/>
    <property type="evidence" value="ECO:0007669"/>
    <property type="project" value="Ensembl"/>
</dbReference>
<dbReference type="GO" id="GO:0030163">
    <property type="term" value="P:protein catabolic process"/>
    <property type="evidence" value="ECO:0007669"/>
    <property type="project" value="Ensembl"/>
</dbReference>
<dbReference type="GO" id="GO:0006508">
    <property type="term" value="P:proteolysis"/>
    <property type="evidence" value="ECO:0000314"/>
    <property type="project" value="UniProtKB"/>
</dbReference>
<dbReference type="CDD" id="cd00041">
    <property type="entry name" value="CUB"/>
    <property type="match status" value="2"/>
</dbReference>
<dbReference type="CDD" id="cd00112">
    <property type="entry name" value="LDLa"/>
    <property type="match status" value="4"/>
</dbReference>
<dbReference type="CDD" id="cd00190">
    <property type="entry name" value="Tryp_SPc"/>
    <property type="match status" value="1"/>
</dbReference>
<dbReference type="FunFam" id="2.60.120.290:FF:000032">
    <property type="entry name" value="Suppressor of tumorigenicity 14 protein homolog"/>
    <property type="match status" value="1"/>
</dbReference>
<dbReference type="FunFam" id="2.60.120.290:FF:000036">
    <property type="entry name" value="Suppressor of tumorigenicity 14 protein homolog"/>
    <property type="match status" value="1"/>
</dbReference>
<dbReference type="FunFam" id="3.30.70.960:FF:000006">
    <property type="entry name" value="Suppressor of tumorigenicity 14 protein homolog"/>
    <property type="match status" value="1"/>
</dbReference>
<dbReference type="FunFam" id="4.10.400.10:FF:000114">
    <property type="entry name" value="Suppressor of tumorigenicity 14 protein homolog"/>
    <property type="match status" value="1"/>
</dbReference>
<dbReference type="FunFam" id="4.10.400.10:FF:000117">
    <property type="entry name" value="Suppressor of tumorigenicity 14 protein homolog"/>
    <property type="match status" value="1"/>
</dbReference>
<dbReference type="FunFam" id="4.10.400.10:FF:000119">
    <property type="entry name" value="Suppressor of tumorigenicity 14 protein homolog"/>
    <property type="match status" value="1"/>
</dbReference>
<dbReference type="FunFam" id="4.10.400.10:FF:000122">
    <property type="entry name" value="Suppressor of tumorigenicity 14 protein homolog"/>
    <property type="match status" value="1"/>
</dbReference>
<dbReference type="FunFam" id="2.40.10.10:FF:000003">
    <property type="entry name" value="Transmembrane serine protease 3"/>
    <property type="match status" value="1"/>
</dbReference>
<dbReference type="Gene3D" id="4.10.400.10">
    <property type="entry name" value="Low-density Lipoprotein Receptor"/>
    <property type="match status" value="4"/>
</dbReference>
<dbReference type="Gene3D" id="3.30.70.960">
    <property type="entry name" value="SEA domain"/>
    <property type="match status" value="1"/>
</dbReference>
<dbReference type="Gene3D" id="2.60.120.290">
    <property type="entry name" value="Spermadhesin, CUB domain"/>
    <property type="match status" value="2"/>
</dbReference>
<dbReference type="Gene3D" id="2.40.10.10">
    <property type="entry name" value="Trypsin-like serine proteases"/>
    <property type="match status" value="2"/>
</dbReference>
<dbReference type="InterPro" id="IPR000859">
    <property type="entry name" value="CUB_dom"/>
</dbReference>
<dbReference type="InterPro" id="IPR036055">
    <property type="entry name" value="LDL_receptor-like_sf"/>
</dbReference>
<dbReference type="InterPro" id="IPR023415">
    <property type="entry name" value="LDLR_class-A_CS"/>
</dbReference>
<dbReference type="InterPro" id="IPR002172">
    <property type="entry name" value="LDrepeatLR_classA_rpt"/>
</dbReference>
<dbReference type="InterPro" id="IPR009003">
    <property type="entry name" value="Peptidase_S1_PA"/>
</dbReference>
<dbReference type="InterPro" id="IPR043504">
    <property type="entry name" value="Peptidase_S1_PA_chymotrypsin"/>
</dbReference>
<dbReference type="InterPro" id="IPR017051">
    <property type="entry name" value="Peptidase_S1A_matripase"/>
</dbReference>
<dbReference type="InterPro" id="IPR000082">
    <property type="entry name" value="SEA_dom"/>
</dbReference>
<dbReference type="InterPro" id="IPR036364">
    <property type="entry name" value="SEA_dom_sf"/>
</dbReference>
<dbReference type="InterPro" id="IPR035914">
    <property type="entry name" value="Sperma_CUB_dom_sf"/>
</dbReference>
<dbReference type="InterPro" id="IPR001254">
    <property type="entry name" value="Trypsin_dom"/>
</dbReference>
<dbReference type="InterPro" id="IPR018114">
    <property type="entry name" value="TRYPSIN_HIS"/>
</dbReference>
<dbReference type="InterPro" id="IPR033116">
    <property type="entry name" value="TRYPSIN_SER"/>
</dbReference>
<dbReference type="PANTHER" id="PTHR24252">
    <property type="entry name" value="ACROSIN-RELATED"/>
    <property type="match status" value="1"/>
</dbReference>
<dbReference type="PANTHER" id="PTHR24252:SF17">
    <property type="entry name" value="SUPPRESSOR OF TUMORIGENICITY 14 PROTEIN HOMOLOG-RELATED"/>
    <property type="match status" value="1"/>
</dbReference>
<dbReference type="Pfam" id="PF00431">
    <property type="entry name" value="CUB"/>
    <property type="match status" value="2"/>
</dbReference>
<dbReference type="Pfam" id="PF00057">
    <property type="entry name" value="Ldl_recept_a"/>
    <property type="match status" value="4"/>
</dbReference>
<dbReference type="Pfam" id="PF01390">
    <property type="entry name" value="SEA"/>
    <property type="match status" value="1"/>
</dbReference>
<dbReference type="Pfam" id="PF00089">
    <property type="entry name" value="Trypsin"/>
    <property type="match status" value="1"/>
</dbReference>
<dbReference type="PIRSF" id="PIRSF036370">
    <property type="entry name" value="ST14"/>
    <property type="match status" value="1"/>
</dbReference>
<dbReference type="PRINTS" id="PR00261">
    <property type="entry name" value="LDLRECEPTOR"/>
</dbReference>
<dbReference type="SMART" id="SM00042">
    <property type="entry name" value="CUB"/>
    <property type="match status" value="2"/>
</dbReference>
<dbReference type="SMART" id="SM00192">
    <property type="entry name" value="LDLa"/>
    <property type="match status" value="4"/>
</dbReference>
<dbReference type="SMART" id="SM00020">
    <property type="entry name" value="Tryp_SPc"/>
    <property type="match status" value="1"/>
</dbReference>
<dbReference type="SUPFAM" id="SSF57424">
    <property type="entry name" value="LDL receptor-like module"/>
    <property type="match status" value="4"/>
</dbReference>
<dbReference type="SUPFAM" id="SSF82671">
    <property type="entry name" value="SEA domain"/>
    <property type="match status" value="1"/>
</dbReference>
<dbReference type="SUPFAM" id="SSF49854">
    <property type="entry name" value="Spermadhesin, CUB domain"/>
    <property type="match status" value="2"/>
</dbReference>
<dbReference type="SUPFAM" id="SSF50494">
    <property type="entry name" value="Trypsin-like serine proteases"/>
    <property type="match status" value="1"/>
</dbReference>
<dbReference type="PROSITE" id="PS01180">
    <property type="entry name" value="CUB"/>
    <property type="match status" value="2"/>
</dbReference>
<dbReference type="PROSITE" id="PS01209">
    <property type="entry name" value="LDLRA_1"/>
    <property type="match status" value="3"/>
</dbReference>
<dbReference type="PROSITE" id="PS50068">
    <property type="entry name" value="LDLRA_2"/>
    <property type="match status" value="4"/>
</dbReference>
<dbReference type="PROSITE" id="PS50024">
    <property type="entry name" value="SEA"/>
    <property type="match status" value="1"/>
</dbReference>
<dbReference type="PROSITE" id="PS50240">
    <property type="entry name" value="TRYPSIN_DOM"/>
    <property type="match status" value="1"/>
</dbReference>
<dbReference type="PROSITE" id="PS00134">
    <property type="entry name" value="TRYPSIN_HIS"/>
    <property type="match status" value="1"/>
</dbReference>
<dbReference type="PROSITE" id="PS00135">
    <property type="entry name" value="TRYPSIN_SER"/>
    <property type="match status" value="1"/>
</dbReference>
<reference key="1">
    <citation type="journal article" date="1999" name="J. Biol. Chem.">
        <title>Molecular cloning of cDNA for matriptase, a matrix-degrading serine protease with trypsin-like activity.</title>
        <authorList>
            <person name="Lin C.Y."/>
            <person name="Anders J."/>
            <person name="Johnson M."/>
            <person name="Sang Q.A."/>
            <person name="Dickson R.B."/>
        </authorList>
    </citation>
    <scope>NUCLEOTIDE SEQUENCE [MRNA]</scope>
    <scope>FUNCTION</scope>
</reference>
<reference key="2">
    <citation type="journal article" date="1999" name="Proc. Natl. Acad. Sci. U.S.A.">
        <title>Reverse biochemistry: use of macromolecular protease inhibitors to dissect complex biological processes and identify a membrane-type serine protease in epithelial cancer and normal tissue.</title>
        <authorList>
            <person name="Takeuchi T."/>
            <person name="Shuman M.A."/>
            <person name="Craik C.S."/>
        </authorList>
    </citation>
    <scope>NUCLEOTIDE SEQUENCE [MRNA]</scope>
</reference>
<reference key="3">
    <citation type="submission" date="1999-07" db="EMBL/GenBank/DDBJ databases">
        <title>Molecular cloning of a novel transmembrane serine protease expressed in human prostate.</title>
        <authorList>
            <person name="Yamaguchi N."/>
            <person name="Mitsui S."/>
        </authorList>
    </citation>
    <scope>NUCLEOTIDE SEQUENCE [MRNA]</scope>
    <source>
        <tissue>Prostate</tissue>
    </source>
</reference>
<reference key="4">
    <citation type="submission" date="1998-04" db="EMBL/GenBank/DDBJ databases">
        <authorList>
            <person name="Tanimoto H."/>
            <person name="Underwood L.J."/>
            <person name="Wang Y."/>
            <person name="Shigemasa K."/>
            <person name="Parmley T.H."/>
            <person name="O'Brien T.J."/>
        </authorList>
    </citation>
    <scope>NUCLEOTIDE SEQUENCE [MRNA]</scope>
    <scope>VARIANT SER-381</scope>
</reference>
<reference key="5">
    <citation type="journal article" date="2004" name="Genome Res.">
        <title>The status, quality, and expansion of the NIH full-length cDNA project: the Mammalian Gene Collection (MGC).</title>
        <authorList>
            <consortium name="The MGC Project Team"/>
        </authorList>
    </citation>
    <scope>NUCLEOTIDE SEQUENCE [LARGE SCALE MRNA]</scope>
    <source>
        <tissue>Blood</tissue>
        <tissue>Muscle</tissue>
    </source>
</reference>
<reference key="6">
    <citation type="submission" date="2000-06" db="EMBL/GenBank/DDBJ databases">
        <title>Genomic analysis of a novel human serine protease SNC19.</title>
        <authorList>
            <person name="Cao J."/>
            <person name="Fan W."/>
            <person name="Zheng S."/>
        </authorList>
    </citation>
    <scope>NUCLEOTIDE SEQUENCE [GENOMIC DNA] OF 340-664</scope>
</reference>
<reference key="7">
    <citation type="journal article" date="1999" name="J. Biol. Chem.">
        <title>Purification and characterization of a complex containing matriptase and a Kunitz-type serine protease inhibitor from human milk.</title>
        <authorList>
            <person name="Lin C.Y."/>
            <person name="Anders J."/>
            <person name="Johnson M."/>
            <person name="Dickson R.B."/>
        </authorList>
    </citation>
    <scope>CHARACTERIZATION</scope>
    <source>
        <tissue>Milk</tissue>
    </source>
</reference>
<reference key="8">
    <citation type="journal article" date="2005" name="Oncogene">
        <title>Adhesion signaling by a novel mitotic substrate of src kinases.</title>
        <authorList>
            <person name="Bhatt A.S."/>
            <person name="Erdjument-Bromage H."/>
            <person name="Tempst P."/>
            <person name="Craik C.S."/>
            <person name="Moasser M.M."/>
        </authorList>
    </citation>
    <scope>INTERACTION WITH CDCP1</scope>
</reference>
<reference key="9">
    <citation type="journal article" date="2006" name="J. Biol. Chem.">
        <title>Protein interaction analysis of ST14 domains and their point and deletion mutants.</title>
        <authorList>
            <person name="Ge W."/>
            <person name="Hu H."/>
            <person name="Ding K."/>
            <person name="Sun L."/>
            <person name="Zheng S."/>
        </authorList>
    </citation>
    <scope>CATALYTIC ACTIVITY</scope>
    <scope>MUTAGENESIS OF HIS-656; ASP-711 AND SER-805</scope>
    <scope>POSSIBLE INTERACTION WITH TMEFF1</scope>
</reference>
<reference key="10">
    <citation type="journal article" date="2009" name="J. Invest. Dermatol.">
        <title>Ichthyosis, follicular atrophoderma, and hypotrichosis caused by mutations in ST14 is associated with impaired profilaggrin processing.</title>
        <authorList>
            <person name="Alef T."/>
            <person name="Torres S."/>
            <person name="Hausser I."/>
            <person name="Metze D."/>
            <person name="Tursen U."/>
            <person name="Lestringant G.G."/>
            <person name="Hennies H.C."/>
        </authorList>
    </citation>
    <scope>FUNCTION</scope>
    <scope>INVOLVEMENT IN ARCI11</scope>
</reference>
<reference key="11">
    <citation type="journal article" date="2011" name="BMC Syst. Biol.">
        <title>Initial characterization of the human central proteome.</title>
        <authorList>
            <person name="Burkard T.R."/>
            <person name="Planyavsky M."/>
            <person name="Kaupe I."/>
            <person name="Breitwieser F.P."/>
            <person name="Buerckstuemmer T."/>
            <person name="Bennett K.L."/>
            <person name="Superti-Furga G."/>
            <person name="Colinge J."/>
        </authorList>
    </citation>
    <scope>IDENTIFICATION BY MASS SPECTROMETRY [LARGE SCALE ANALYSIS]</scope>
</reference>
<reference key="12">
    <citation type="journal article" date="2017" name="J. Biol. Chem.">
        <title>Phosphorylation of the type II transmembrane serine protease, TMPRSS13, in hepatocyte growth factor activator inhibitor-1 and -2-mediated cell-surface localization.</title>
        <authorList>
            <person name="Murray A.S."/>
            <person name="Varela F.A."/>
            <person name="Hyland T.E."/>
            <person name="Schoenbeck A.J."/>
            <person name="White J.M."/>
            <person name="Tanabe L.M."/>
            <person name="Todi S.V."/>
            <person name="List K."/>
        </authorList>
    </citation>
    <scope>FUNCTION</scope>
</reference>
<reference key="13">
    <citation type="journal article" date="2021" name="Front. Immunol.">
        <title>Iripin-3, a New Salivary Protein Isolated From Ixodes ricinus Ticks, Displays Immunomodulatory and Anti-Hemostatic Properties In Vitro.</title>
        <authorList>
            <person name="Chlastakova A."/>
            <person name="Kotal J."/>
            <person name="Berankova Z."/>
            <person name="Kascakova B."/>
            <person name="Martins L.A."/>
            <person name="Langhansova H."/>
            <person name="Prudnikova T."/>
            <person name="Ederova M."/>
            <person name="Kuta Smatanova I."/>
            <person name="Kotsyfakis M."/>
            <person name="Chmelar J."/>
        </authorList>
    </citation>
    <scope>INTERACTION WITH TICK IRIPIN-3</scope>
</reference>
<reference key="14">
    <citation type="journal article" date="2023" name="Front. Immunol.">
        <title>Iripin-1, a new anti-inflammatory tick serpin, inhibits leukocyte recruitment &lt;i&gt;in vivo&lt;/i&gt; while altering the levels of chemokines and adhesion molecules.</title>
        <authorList>
            <person name="Chlastakova A."/>
            <person name="Kascakova B."/>
            <person name="Kotal J."/>
            <person name="Langhansova H."/>
            <person name="Kotsyfakis M."/>
            <person name="Kuta Smatanova I."/>
            <person name="Tirloni L."/>
            <person name="Chmelar J."/>
        </authorList>
    </citation>
    <scope>INTERACTION WITH TICK IRIPIN-1</scope>
</reference>
<reference key="15">
    <citation type="journal article" date="2002" name="J. Biol. Chem.">
        <title>Catalytic domain structures of MT-SP1/matriptase, a matrix-degrading transmembrane serine proteinase.</title>
        <authorList>
            <person name="Friedrich R."/>
            <person name="Fuentes-Prior P."/>
            <person name="Ong E."/>
            <person name="Coombs G."/>
            <person name="Hunter M."/>
            <person name="Oehler R."/>
            <person name="Pierson D."/>
            <person name="Gonzalez R."/>
            <person name="Huber R."/>
            <person name="Bode W."/>
            <person name="Madison E.L."/>
        </authorList>
    </citation>
    <scope>X-RAY CRYSTALLOGRAPHY (1.3 ANGSTROMS) OF 615-855 IN COMPLEX WITH INHIBITORS</scope>
    <scope>DISULFIDE BONDS</scope>
</reference>
<reference key="16">
    <citation type="journal article" date="2007" name="Am. J. Hum. Genet.">
        <title>Autosomal recessive ichthyosis with hypotrichosis caused by a mutation in ST14, encoding type II transmembrane serine protease matriptase.</title>
        <authorList>
            <person name="Basel-Vanagaite L."/>
            <person name="Attia R."/>
            <person name="Ishida-Yamamoto A."/>
            <person name="Rainshtein L."/>
            <person name="Ben Amitai D."/>
            <person name="Lurie R."/>
            <person name="Pasmanik-Chor M."/>
            <person name="Indelman M."/>
            <person name="Zvulunov A."/>
            <person name="Saban S."/>
            <person name="Magal N."/>
            <person name="Sprecher E."/>
            <person name="Shohat M."/>
        </authorList>
    </citation>
    <scope>VARIANT ARCI11 ARG-827</scope>
</reference>
<evidence type="ECO:0000250" key="1"/>
<evidence type="ECO:0000255" key="2"/>
<evidence type="ECO:0000255" key="3">
    <source>
        <dbReference type="PROSITE-ProRule" id="PRU00059"/>
    </source>
</evidence>
<evidence type="ECO:0000255" key="4">
    <source>
        <dbReference type="PROSITE-ProRule" id="PRU00124"/>
    </source>
</evidence>
<evidence type="ECO:0000255" key="5">
    <source>
        <dbReference type="PROSITE-ProRule" id="PRU00188"/>
    </source>
</evidence>
<evidence type="ECO:0000255" key="6">
    <source>
        <dbReference type="PROSITE-ProRule" id="PRU00274"/>
    </source>
</evidence>
<evidence type="ECO:0000256" key="7">
    <source>
        <dbReference type="SAM" id="MobiDB-lite"/>
    </source>
</evidence>
<evidence type="ECO:0000269" key="8">
    <source>
    </source>
</evidence>
<evidence type="ECO:0000269" key="9">
    <source>
    </source>
</evidence>
<evidence type="ECO:0000269" key="10">
    <source>
    </source>
</evidence>
<evidence type="ECO:0000269" key="11">
    <source>
    </source>
</evidence>
<evidence type="ECO:0000269" key="12">
    <source>
    </source>
</evidence>
<evidence type="ECO:0000269" key="13">
    <source>
    </source>
</evidence>
<evidence type="ECO:0000269" key="14">
    <source>
    </source>
</evidence>
<evidence type="ECO:0000269" key="15">
    <source>
    </source>
</evidence>
<evidence type="ECO:0000269" key="16">
    <source>
    </source>
</evidence>
<evidence type="ECO:0000269" key="17">
    <source ref="4"/>
</evidence>
<evidence type="ECO:0000305" key="18"/>
<evidence type="ECO:0007829" key="19">
    <source>
        <dbReference type="PDB" id="3NCL"/>
    </source>
</evidence>
<evidence type="ECO:0007829" key="20">
    <source>
        <dbReference type="PDB" id="4JZ1"/>
    </source>
</evidence>
<evidence type="ECO:0007829" key="21">
    <source>
        <dbReference type="PDB" id="5LYO"/>
    </source>
</evidence>
<evidence type="ECO:0007829" key="22">
    <source>
        <dbReference type="PDB" id="8G1V"/>
    </source>
</evidence>